<comment type="function">
    <text evidence="5">Catalyzes the condensation of two molecules of acetyl-CoA to produce acetoacetyl-CoA.</text>
</comment>
<comment type="catalytic activity">
    <reaction evidence="5">
        <text>2 acetyl-CoA = acetoacetyl-CoA + CoA</text>
        <dbReference type="Rhea" id="RHEA:21036"/>
        <dbReference type="ChEBI" id="CHEBI:57286"/>
        <dbReference type="ChEBI" id="CHEBI:57287"/>
        <dbReference type="ChEBI" id="CHEBI:57288"/>
        <dbReference type="EC" id="2.3.1.9"/>
    </reaction>
    <physiologicalReaction direction="left-to-right" evidence="5">
        <dbReference type="Rhea" id="RHEA:21037"/>
    </physiologicalReaction>
</comment>
<comment type="biophysicochemical properties">
    <kinetics>
        <KM evidence="5">2.9 mM for acetyl-CoA</KM>
        <Vmax evidence="5">1.9 umol/min/mg enzyme with acetyl-CoA as substrate</Vmax>
    </kinetics>
</comment>
<comment type="pathway">
    <text evidence="7">Metabolic intermediate biosynthesis; (R)-mevalonate biosynthesis; (R)-mevalonate from acetyl-CoA: step 1/3.</text>
</comment>
<comment type="subcellular location">
    <subcellularLocation>
        <location evidence="4">Cytoplasm</location>
    </subcellularLocation>
    <subcellularLocation>
        <location evidence="4">Peroxisome</location>
    </subcellularLocation>
</comment>
<comment type="alternative products">
    <event type="alternative splicing"/>
    <isoform>
        <id>Q9FIK7-1</id>
        <name>1</name>
        <sequence type="displayed"/>
    </isoform>
    <isoform>
        <id>Q9FIK7-2</id>
        <name>2</name>
        <sequence type="described" ref="VSP_018140"/>
    </isoform>
</comment>
<comment type="tissue specificity">
    <text evidence="5">Expressed in the vascular system of roots, cotyledons, young leaves, fully expanded leaves, stems, flowers, and funiculi of siliques.</text>
</comment>
<comment type="disruption phenotype">
    <text evidence="5">No visible phenotype under normal growth and stress growth conditions.</text>
</comment>
<comment type="miscellaneous">
    <molecule>Isoform 2</molecule>
    <text evidence="7">May be due to an intron retention.</text>
</comment>
<comment type="similarity">
    <text evidence="7">Belongs to the thiolase-like superfamily. Thiolase family.</text>
</comment>
<protein>
    <recommendedName>
        <fullName evidence="7">Acetyl-CoA acetyltransferase 1</fullName>
        <ecNumber evidence="5">2.3.1.9</ecNumber>
    </recommendedName>
    <alternativeName>
        <fullName evidence="6">Acetoacetyl-CoA thiolase 1</fullName>
        <shortName evidence="7">Thiolase 1</shortName>
    </alternativeName>
</protein>
<gene>
    <name evidence="6" type="primary">ACCT1</name>
    <name evidence="8" type="ordered locus">At5g47720</name>
    <name evidence="9" type="ORF">MCA23.4</name>
</gene>
<sequence length="415" mass="43292">MAPPVSDDSLQPRDVCVVGVARTPIGDFLGSLSSLTATRLGSIAIQAALKRAHVDPALVEEVFFGNVLTANLGQAPARQAALGAGIPYSVICTTINKVCAAGMKSVMLASQSIQLGLNDIVVAGGMESMSNVPKYLPDARRGSRLGHDTVVDGMMKDGLWDVYNDFGMGVCGEICADQYRITREEQDAYAIQSFERGIAAQNTQLFAWEIVPVEVSTGRGRPSVVIDKDEGLGKFDAAKLKKLRPSFKEDGGSVTAGNASSISDGAAALVLVSGEKALELGLHVIAKIRGYADAAQAPELFTTTPALAIPKAIKRAGLDASQVDYYEINEAFSVVALANQKLLGLDPERLNAHGGAVSLGHPLGCSGARILVTLLGVLRAKKGKYGVASICNGGGGASALVLEFMSEKTIGYSAL</sequence>
<accession>Q9FIK7</accession>
<accession>Q3E710</accession>
<accession>Q3E8F1</accession>
<proteinExistence type="evidence at protein level"/>
<organism>
    <name type="scientific">Arabidopsis thaliana</name>
    <name type="common">Mouse-ear cress</name>
    <dbReference type="NCBI Taxonomy" id="3702"/>
    <lineage>
        <taxon>Eukaryota</taxon>
        <taxon>Viridiplantae</taxon>
        <taxon>Streptophyta</taxon>
        <taxon>Embryophyta</taxon>
        <taxon>Tracheophyta</taxon>
        <taxon>Spermatophyta</taxon>
        <taxon>Magnoliopsida</taxon>
        <taxon>eudicotyledons</taxon>
        <taxon>Gunneridae</taxon>
        <taxon>Pentapetalae</taxon>
        <taxon>rosids</taxon>
        <taxon>malvids</taxon>
        <taxon>Brassicales</taxon>
        <taxon>Brassicaceae</taxon>
        <taxon>Camelineae</taxon>
        <taxon>Arabidopsis</taxon>
    </lineage>
</organism>
<feature type="chain" id="PRO_0000206412" description="Acetyl-CoA acetyltransferase 1">
    <location>
        <begin position="1"/>
        <end position="415"/>
    </location>
</feature>
<feature type="active site" description="Acyl-thioester intermediate" evidence="1">
    <location>
        <position position="99"/>
    </location>
</feature>
<feature type="active site" description="Proton acceptor" evidence="3">
    <location>
        <position position="361"/>
    </location>
</feature>
<feature type="active site" description="Proton acceptor" evidence="3">
    <location>
        <position position="391"/>
    </location>
</feature>
<feature type="binding site" evidence="2">
    <location>
        <position position="239"/>
    </location>
    <ligand>
        <name>CoA</name>
        <dbReference type="ChEBI" id="CHEBI:57287"/>
    </ligand>
</feature>
<feature type="binding site" evidence="2">
    <location>
        <position position="256"/>
    </location>
    <ligand>
        <name>K(+)</name>
        <dbReference type="ChEBI" id="CHEBI:29103"/>
    </ligand>
</feature>
<feature type="binding site" evidence="2">
    <location>
        <position position="260"/>
    </location>
    <ligand>
        <name>CoA</name>
        <dbReference type="ChEBI" id="CHEBI:57287"/>
    </ligand>
</feature>
<feature type="binding site" evidence="2">
    <location>
        <position position="357"/>
    </location>
    <ligand>
        <name>K(+)</name>
        <dbReference type="ChEBI" id="CHEBI:29103"/>
    </ligand>
</feature>
<feature type="splice variant" id="VSP_018140" description="In isoform 2." evidence="7">
    <location>
        <begin position="406"/>
        <end position="415"/>
    </location>
</feature>
<evidence type="ECO:0000250" key="1">
    <source>
        <dbReference type="UniProtKB" id="P24752"/>
    </source>
</evidence>
<evidence type="ECO:0000250" key="2">
    <source>
        <dbReference type="UniProtKB" id="Q4WCL5"/>
    </source>
</evidence>
<evidence type="ECO:0000255" key="3">
    <source>
        <dbReference type="PROSITE-ProRule" id="PRU10020"/>
    </source>
</evidence>
<evidence type="ECO:0000269" key="4">
    <source>
    </source>
</evidence>
<evidence type="ECO:0000269" key="5">
    <source>
    </source>
</evidence>
<evidence type="ECO:0000303" key="6">
    <source>
    </source>
</evidence>
<evidence type="ECO:0000305" key="7"/>
<evidence type="ECO:0000312" key="8">
    <source>
        <dbReference type="Araport" id="AT5G47720"/>
    </source>
</evidence>
<evidence type="ECO:0000312" key="9">
    <source>
        <dbReference type="EMBL" id="BAB11319.1"/>
    </source>
</evidence>
<keyword id="KW-0012">Acyltransferase</keyword>
<keyword id="KW-0025">Alternative splicing</keyword>
<keyword id="KW-0963">Cytoplasm</keyword>
<keyword id="KW-0479">Metal-binding</keyword>
<keyword id="KW-0576">Peroxisome</keyword>
<keyword id="KW-0630">Potassium</keyword>
<keyword id="KW-1185">Reference proteome</keyword>
<keyword id="KW-0808">Transferase</keyword>
<reference key="1">
    <citation type="journal article" date="1998" name="DNA Res.">
        <title>Structural analysis of Arabidopsis thaliana chromosome 5. VIII. Sequence features of the regions of 1,081,958 bp covered by seventeen physically assigned P1 and TAC clones.</title>
        <authorList>
            <person name="Asamizu E."/>
            <person name="Sato S."/>
            <person name="Kaneko T."/>
            <person name="Nakamura Y."/>
            <person name="Kotani H."/>
            <person name="Miyajima N."/>
            <person name="Tabata S."/>
        </authorList>
    </citation>
    <scope>NUCLEOTIDE SEQUENCE [LARGE SCALE GENOMIC DNA]</scope>
    <source>
        <strain>cv. Columbia</strain>
    </source>
</reference>
<reference key="2">
    <citation type="journal article" date="2017" name="Plant J.">
        <title>Araport11: a complete reannotation of the Arabidopsis thaliana reference genome.</title>
        <authorList>
            <person name="Cheng C.Y."/>
            <person name="Krishnakumar V."/>
            <person name="Chan A.P."/>
            <person name="Thibaud-Nissen F."/>
            <person name="Schobel S."/>
            <person name="Town C.D."/>
        </authorList>
    </citation>
    <scope>GENOME REANNOTATION</scope>
    <source>
        <strain>cv. Columbia</strain>
    </source>
</reference>
<reference key="3">
    <citation type="submission" date="2002-03" db="EMBL/GenBank/DDBJ databases">
        <title>Full-length cDNA from Arabidopsis thaliana.</title>
        <authorList>
            <person name="Brover V.V."/>
            <person name="Troukhan M.E."/>
            <person name="Alexandrov N.A."/>
            <person name="Lu Y.-P."/>
            <person name="Flavell R.B."/>
            <person name="Feldmann K.A."/>
        </authorList>
    </citation>
    <scope>NUCLEOTIDE SEQUENCE [LARGE SCALE MRNA] (ISOFORM 1)</scope>
</reference>
<reference key="4">
    <citation type="journal article" date="2007" name="Plant Mol. Biol.">
        <title>Nine 3-ketoacyl-CoA thiolases (KATs) and acetoacetyl-CoA thiolases (ACATs) encoded by five genes in Arabidopsis thaliana are targeted either to peroxisomes or cytosol but not to mitochondria.</title>
        <authorList>
            <person name="Carrie C."/>
            <person name="Murcha M.W."/>
            <person name="Millar A.H."/>
            <person name="Smith S.M."/>
            <person name="Whelan J."/>
        </authorList>
    </citation>
    <scope>SUBCELLULAR LOCATION</scope>
</reference>
<reference key="5">
    <citation type="journal article" date="2012" name="Plant J.">
        <title>Reverse genetic characterization of two paralogous acetoacetyl CoA thiolase genes in Arabidopsis reveals their importance in plant growth and development.</title>
        <authorList>
            <person name="Jin H."/>
            <person name="Song Z."/>
            <person name="Nikolau B.J."/>
        </authorList>
    </citation>
    <scope>FUNCTION</scope>
    <scope>CATALYTIC ACTIVITY</scope>
    <scope>BIOPHYSICOCHEMICAL PROPERTIES</scope>
    <scope>TISSUE SPECIFICITY</scope>
    <scope>DISRUPTION PHENOTYPE</scope>
</reference>
<name>AACT1_ARATH</name>
<dbReference type="EC" id="2.3.1.9" evidence="5"/>
<dbReference type="EMBL" id="AB016886">
    <property type="protein sequence ID" value="BAB11319.1"/>
    <property type="molecule type" value="Genomic_DNA"/>
</dbReference>
<dbReference type="EMBL" id="CP002688">
    <property type="protein sequence ID" value="AED95558.1"/>
    <property type="molecule type" value="Genomic_DNA"/>
</dbReference>
<dbReference type="EMBL" id="CP002688">
    <property type="protein sequence ID" value="AED95559.1"/>
    <property type="molecule type" value="Genomic_DNA"/>
</dbReference>
<dbReference type="EMBL" id="CP002688">
    <property type="protein sequence ID" value="AED95560.1"/>
    <property type="molecule type" value="Genomic_DNA"/>
</dbReference>
<dbReference type="EMBL" id="CP002688">
    <property type="protein sequence ID" value="AED95561.1"/>
    <property type="molecule type" value="Genomic_DNA"/>
</dbReference>
<dbReference type="EMBL" id="AY088740">
    <property type="protein sequence ID" value="AAM67058.1"/>
    <property type="molecule type" value="mRNA"/>
</dbReference>
<dbReference type="RefSeq" id="NP_199583.1">
    <molecule id="Q9FIK7-1"/>
    <property type="nucleotide sequence ID" value="NM_124146.3"/>
</dbReference>
<dbReference type="RefSeq" id="NP_851150.1">
    <molecule id="Q9FIK7-2"/>
    <property type="nucleotide sequence ID" value="NM_180819.3"/>
</dbReference>
<dbReference type="RefSeq" id="NP_974900.1">
    <molecule id="Q9FIK7-2"/>
    <property type="nucleotide sequence ID" value="NM_203171.2"/>
</dbReference>
<dbReference type="RefSeq" id="NP_974901.2">
    <molecule id="Q9FIK7-1"/>
    <property type="nucleotide sequence ID" value="NM_203172.4"/>
</dbReference>
<dbReference type="SMR" id="Q9FIK7"/>
<dbReference type="BioGRID" id="20071">
    <property type="interactions" value="2"/>
</dbReference>
<dbReference type="FunCoup" id="Q9FIK7">
    <property type="interactions" value="1964"/>
</dbReference>
<dbReference type="STRING" id="3702.Q9FIK7"/>
<dbReference type="PaxDb" id="3702-AT5G47720.4"/>
<dbReference type="ProteomicsDB" id="234342">
    <molecule id="Q9FIK7-1"/>
</dbReference>
<dbReference type="EnsemblPlants" id="AT5G47720.1">
    <molecule id="Q9FIK7-2"/>
    <property type="protein sequence ID" value="AT5G47720.1"/>
    <property type="gene ID" value="AT5G47720"/>
</dbReference>
<dbReference type="EnsemblPlants" id="AT5G47720.2">
    <molecule id="Q9FIK7-1"/>
    <property type="protein sequence ID" value="AT5G47720.2"/>
    <property type="gene ID" value="AT5G47720"/>
</dbReference>
<dbReference type="EnsemblPlants" id="AT5G47720.3">
    <molecule id="Q9FIK7-2"/>
    <property type="protein sequence ID" value="AT5G47720.3"/>
    <property type="gene ID" value="AT5G47720"/>
</dbReference>
<dbReference type="EnsemblPlants" id="AT5G47720.4">
    <molecule id="Q9FIK7-1"/>
    <property type="protein sequence ID" value="AT5G47720.4"/>
    <property type="gene ID" value="AT5G47720"/>
</dbReference>
<dbReference type="GeneID" id="834823"/>
<dbReference type="Gramene" id="AT5G47720.1">
    <molecule id="Q9FIK7-2"/>
    <property type="protein sequence ID" value="AT5G47720.1"/>
    <property type="gene ID" value="AT5G47720"/>
</dbReference>
<dbReference type="Gramene" id="AT5G47720.2">
    <molecule id="Q9FIK7-1"/>
    <property type="protein sequence ID" value="AT5G47720.2"/>
    <property type="gene ID" value="AT5G47720"/>
</dbReference>
<dbReference type="Gramene" id="AT5G47720.3">
    <molecule id="Q9FIK7-2"/>
    <property type="protein sequence ID" value="AT5G47720.3"/>
    <property type="gene ID" value="AT5G47720"/>
</dbReference>
<dbReference type="Gramene" id="AT5G47720.4">
    <molecule id="Q9FIK7-1"/>
    <property type="protein sequence ID" value="AT5G47720.4"/>
    <property type="gene ID" value="AT5G47720"/>
</dbReference>
<dbReference type="KEGG" id="ath:AT5G47720"/>
<dbReference type="Araport" id="AT5G47720"/>
<dbReference type="TAIR" id="AT5G47720">
    <property type="gene designation" value="AACT1"/>
</dbReference>
<dbReference type="eggNOG" id="KOG1390">
    <property type="taxonomic scope" value="Eukaryota"/>
</dbReference>
<dbReference type="InParanoid" id="Q9FIK7"/>
<dbReference type="OMA" id="SMGTFGE"/>
<dbReference type="OrthoDB" id="5404651at2759"/>
<dbReference type="PhylomeDB" id="Q9FIK7"/>
<dbReference type="BRENDA" id="2.3.1.9">
    <property type="organism ID" value="399"/>
</dbReference>
<dbReference type="UniPathway" id="UPA00058">
    <property type="reaction ID" value="UER00101"/>
</dbReference>
<dbReference type="PRO" id="PR:Q9FIK7"/>
<dbReference type="Proteomes" id="UP000006548">
    <property type="component" value="Chromosome 5"/>
</dbReference>
<dbReference type="ExpressionAtlas" id="Q9FIK7">
    <property type="expression patterns" value="baseline and differential"/>
</dbReference>
<dbReference type="GO" id="GO:0005777">
    <property type="term" value="C:peroxisome"/>
    <property type="evidence" value="ECO:0007669"/>
    <property type="project" value="UniProtKB-SubCell"/>
</dbReference>
<dbReference type="GO" id="GO:0003985">
    <property type="term" value="F:acetyl-CoA C-acetyltransferase activity"/>
    <property type="evidence" value="ECO:0000314"/>
    <property type="project" value="TAIR"/>
</dbReference>
<dbReference type="GO" id="GO:0046872">
    <property type="term" value="F:metal ion binding"/>
    <property type="evidence" value="ECO:0007669"/>
    <property type="project" value="UniProtKB-KW"/>
</dbReference>
<dbReference type="CDD" id="cd00751">
    <property type="entry name" value="thiolase"/>
    <property type="match status" value="1"/>
</dbReference>
<dbReference type="FunFam" id="3.40.47.10:FF:000007">
    <property type="entry name" value="acetyl-CoA acetyltransferase, mitochondrial"/>
    <property type="match status" value="1"/>
</dbReference>
<dbReference type="Gene3D" id="3.40.47.10">
    <property type="match status" value="1"/>
</dbReference>
<dbReference type="InterPro" id="IPR002155">
    <property type="entry name" value="Thiolase"/>
</dbReference>
<dbReference type="InterPro" id="IPR016039">
    <property type="entry name" value="Thiolase-like"/>
</dbReference>
<dbReference type="InterPro" id="IPR020610">
    <property type="entry name" value="Thiolase_AS"/>
</dbReference>
<dbReference type="InterPro" id="IPR020617">
    <property type="entry name" value="Thiolase_C"/>
</dbReference>
<dbReference type="InterPro" id="IPR020613">
    <property type="entry name" value="Thiolase_CS"/>
</dbReference>
<dbReference type="InterPro" id="IPR020616">
    <property type="entry name" value="Thiolase_N"/>
</dbReference>
<dbReference type="NCBIfam" id="TIGR01930">
    <property type="entry name" value="AcCoA-C-Actrans"/>
    <property type="match status" value="1"/>
</dbReference>
<dbReference type="PANTHER" id="PTHR18919:SF157">
    <property type="entry name" value="ACETYL-COA ACETYLTRANSFERASE 1"/>
    <property type="match status" value="1"/>
</dbReference>
<dbReference type="PANTHER" id="PTHR18919">
    <property type="entry name" value="ACETYL-COA C-ACYLTRANSFERASE"/>
    <property type="match status" value="1"/>
</dbReference>
<dbReference type="Pfam" id="PF02803">
    <property type="entry name" value="Thiolase_C"/>
    <property type="match status" value="1"/>
</dbReference>
<dbReference type="Pfam" id="PF00108">
    <property type="entry name" value="Thiolase_N"/>
    <property type="match status" value="1"/>
</dbReference>
<dbReference type="PIRSF" id="PIRSF000429">
    <property type="entry name" value="Ac-CoA_Ac_transf"/>
    <property type="match status" value="1"/>
</dbReference>
<dbReference type="SUPFAM" id="SSF53901">
    <property type="entry name" value="Thiolase-like"/>
    <property type="match status" value="2"/>
</dbReference>
<dbReference type="PROSITE" id="PS00737">
    <property type="entry name" value="THIOLASE_2"/>
    <property type="match status" value="1"/>
</dbReference>
<dbReference type="PROSITE" id="PS00099">
    <property type="entry name" value="THIOLASE_3"/>
    <property type="match status" value="1"/>
</dbReference>